<protein>
    <recommendedName>
        <fullName evidence="8">Epsilon-sarcoglycan</fullName>
        <shortName evidence="2">Epsilon-SG</shortName>
    </recommendedName>
</protein>
<organism>
    <name type="scientific">Rattus norvegicus</name>
    <name type="common">Rat</name>
    <dbReference type="NCBI Taxonomy" id="10116"/>
    <lineage>
        <taxon>Eukaryota</taxon>
        <taxon>Metazoa</taxon>
        <taxon>Chordata</taxon>
        <taxon>Craniata</taxon>
        <taxon>Vertebrata</taxon>
        <taxon>Euteleostomi</taxon>
        <taxon>Mammalia</taxon>
        <taxon>Eutheria</taxon>
        <taxon>Euarchontoglires</taxon>
        <taxon>Glires</taxon>
        <taxon>Rodentia</taxon>
        <taxon>Myomorpha</taxon>
        <taxon>Muroidea</taxon>
        <taxon>Muridae</taxon>
        <taxon>Murinae</taxon>
        <taxon>Rattus</taxon>
    </lineage>
</organism>
<accession>Q6YAT4</accession>
<dbReference type="EMBL" id="AY164274">
    <property type="protein sequence ID" value="AAO37579.1"/>
    <property type="molecule type" value="mRNA"/>
</dbReference>
<dbReference type="EMBL" id="BC089947">
    <property type="protein sequence ID" value="AAH89947.1"/>
    <property type="molecule type" value="mRNA"/>
</dbReference>
<dbReference type="RefSeq" id="NP_001002023.1">
    <property type="nucleotide sequence ID" value="NM_001002023.2"/>
</dbReference>
<dbReference type="SMR" id="Q6YAT4"/>
<dbReference type="FunCoup" id="Q6YAT4">
    <property type="interactions" value="1861"/>
</dbReference>
<dbReference type="STRING" id="10116.ENSRNOP00000064432"/>
<dbReference type="GlyCosmos" id="Q6YAT4">
    <property type="glycosylation" value="1 site, No reported glycans"/>
</dbReference>
<dbReference type="GlyGen" id="Q6YAT4">
    <property type="glycosylation" value="1 site"/>
</dbReference>
<dbReference type="PhosphoSitePlus" id="Q6YAT4"/>
<dbReference type="SwissPalm" id="Q6YAT4"/>
<dbReference type="PaxDb" id="10116-ENSRNOP00000064432"/>
<dbReference type="GeneID" id="432360"/>
<dbReference type="KEGG" id="rno:432360"/>
<dbReference type="AGR" id="RGD:1303201"/>
<dbReference type="CTD" id="8910"/>
<dbReference type="RGD" id="1303201">
    <property type="gene designation" value="Sgce"/>
</dbReference>
<dbReference type="eggNOG" id="KOG4482">
    <property type="taxonomic scope" value="Eukaryota"/>
</dbReference>
<dbReference type="InParanoid" id="Q6YAT4"/>
<dbReference type="PhylomeDB" id="Q6YAT4"/>
<dbReference type="Reactome" id="R-RNO-9913351">
    <property type="pathway name" value="Formation of the dystrophin-glycoprotein complex (DGC)"/>
</dbReference>
<dbReference type="PRO" id="PR:Q6YAT4"/>
<dbReference type="Proteomes" id="UP000002494">
    <property type="component" value="Unplaced"/>
</dbReference>
<dbReference type="GO" id="GO:0005856">
    <property type="term" value="C:cytoskeleton"/>
    <property type="evidence" value="ECO:0007669"/>
    <property type="project" value="UniProtKB-SubCell"/>
</dbReference>
<dbReference type="GO" id="GO:0032590">
    <property type="term" value="C:dendrite membrane"/>
    <property type="evidence" value="ECO:0000250"/>
    <property type="project" value="UniProtKB"/>
</dbReference>
<dbReference type="GO" id="GO:0016010">
    <property type="term" value="C:dystrophin-associated glycoprotein complex"/>
    <property type="evidence" value="ECO:0000266"/>
    <property type="project" value="RGD"/>
</dbReference>
<dbReference type="GO" id="GO:0005794">
    <property type="term" value="C:Golgi apparatus"/>
    <property type="evidence" value="ECO:0000250"/>
    <property type="project" value="UniProtKB"/>
</dbReference>
<dbReference type="GO" id="GO:0005886">
    <property type="term" value="C:plasma membrane"/>
    <property type="evidence" value="ECO:0000250"/>
    <property type="project" value="UniProtKB"/>
</dbReference>
<dbReference type="GO" id="GO:0016012">
    <property type="term" value="C:sarcoglycan complex"/>
    <property type="evidence" value="ECO:0000266"/>
    <property type="project" value="RGD"/>
</dbReference>
<dbReference type="GO" id="GO:0042383">
    <property type="term" value="C:sarcolemma"/>
    <property type="evidence" value="ECO:0007669"/>
    <property type="project" value="UniProtKB-SubCell"/>
</dbReference>
<dbReference type="GO" id="GO:0001822">
    <property type="term" value="P:kidney development"/>
    <property type="evidence" value="ECO:0000270"/>
    <property type="project" value="RGD"/>
</dbReference>
<dbReference type="GO" id="GO:0007519">
    <property type="term" value="P:skeletal muscle tissue development"/>
    <property type="evidence" value="ECO:0000270"/>
    <property type="project" value="RGD"/>
</dbReference>
<dbReference type="InterPro" id="IPR006644">
    <property type="entry name" value="Cadg"/>
</dbReference>
<dbReference type="InterPro" id="IPR008908">
    <property type="entry name" value="Sarcoglycan_alpha/epsilon"/>
</dbReference>
<dbReference type="InterPro" id="IPR048347">
    <property type="entry name" value="Sarcoglycan_C"/>
</dbReference>
<dbReference type="InterPro" id="IPR048346">
    <property type="entry name" value="Sarcoglycan_N"/>
</dbReference>
<dbReference type="PANTHER" id="PTHR10132">
    <property type="entry name" value="ALPHA-/EPSILON-SARCOGLYCAN FAMILY MEMBER"/>
    <property type="match status" value="1"/>
</dbReference>
<dbReference type="PANTHER" id="PTHR10132:SF17">
    <property type="entry name" value="EPSILON-SARCOGLYCAN"/>
    <property type="match status" value="1"/>
</dbReference>
<dbReference type="Pfam" id="PF05510">
    <property type="entry name" value="Sarcoglycan_2"/>
    <property type="match status" value="1"/>
</dbReference>
<dbReference type="Pfam" id="PF20989">
    <property type="entry name" value="Sarcoglycan_2_C"/>
    <property type="match status" value="1"/>
</dbReference>
<dbReference type="SMART" id="SM00736">
    <property type="entry name" value="CADG"/>
    <property type="match status" value="1"/>
</dbReference>
<gene>
    <name evidence="8 9" type="primary">Sgce</name>
</gene>
<name>SGCE_RAT</name>
<proteinExistence type="evidence at transcript level"/>
<reference evidence="6 8" key="1">
    <citation type="journal article" date="2003" name="Brain Res. Mol. Brain Res.">
        <title>Cloning, developmental regulation and neural localization of rat epsilon-sarcoglycan.</title>
        <authorList>
            <person name="Xiao J."/>
            <person name="LeDoux M.S."/>
        </authorList>
    </citation>
    <scope>NUCLEOTIDE SEQUENCE [MRNA]</scope>
    <scope>TISSUE SPECIFICITY</scope>
    <scope>DEVELOPMENTAL STAGE</scope>
    <source>
        <strain evidence="8">Sprague-Dawley</strain>
    </source>
</reference>
<reference evidence="7" key="2">
    <citation type="journal article" date="2004" name="Genome Res.">
        <title>The status, quality, and expansion of the NIH full-length cDNA project: the Mammalian Gene Collection (MGC).</title>
        <authorList>
            <consortium name="The MGC Project Team"/>
        </authorList>
    </citation>
    <scope>NUCLEOTIDE SEQUENCE [LARGE SCALE MRNA]</scope>
    <source>
        <tissue evidence="7">Brain</tissue>
    </source>
</reference>
<feature type="chain" id="PRO_0000378624" description="Epsilon-sarcoglycan">
    <location>
        <begin position="1"/>
        <end position="437"/>
    </location>
</feature>
<feature type="topological domain" description="Extracellular" evidence="2 4">
    <location>
        <begin position="1"/>
        <end position="317"/>
    </location>
</feature>
<feature type="transmembrane region" description="Helical" evidence="4">
    <location>
        <begin position="318"/>
        <end position="338"/>
    </location>
</feature>
<feature type="topological domain" description="Cytoplasmic" evidence="2 4">
    <location>
        <begin position="339"/>
        <end position="437"/>
    </location>
</feature>
<feature type="glycosylation site" description="N-linked (GlcNAc...) asparagine" evidence="4">
    <location>
        <position position="200"/>
    </location>
</feature>
<keyword id="KW-1003">Cell membrane</keyword>
<keyword id="KW-0966">Cell projection</keyword>
<keyword id="KW-0963">Cytoplasm</keyword>
<keyword id="KW-0206">Cytoskeleton</keyword>
<keyword id="KW-0325">Glycoprotein</keyword>
<keyword id="KW-0333">Golgi apparatus</keyword>
<keyword id="KW-0472">Membrane</keyword>
<keyword id="KW-1185">Reference proteome</keyword>
<keyword id="KW-0812">Transmembrane</keyword>
<keyword id="KW-1133">Transmembrane helix</keyword>
<keyword id="KW-0832">Ubl conjugation</keyword>
<sequence>MLLFWWWELGDPCAWTGKGRGTLKMSPATTGTFLLTVYTLFSKVHSDRNVYPSAGVLFVHVLEREYFKGEFPPYPKPGEVSNDPITFNTNLMGYPDRPGWLRYIQRTPYSDGVLYGSPTAENVGKPTIIEITAYNRRTFETARHNLIINIMSAEEFPLPYQAEFFIKNMNVEEMLASEVLGDFLGAVKNVWQPERLNAINITSALDRGGRVPLPIKDMKEGVYVMVGADVAFSSCLREVENPQNQLRCSQEMEPVITCDKKFRTQFYIDWCKISLVDKTKQVSTYQEVVRGEGILPDGGEYKPPSDSLKSRDYYTDFLVTLAVPSAVALVLFLILAYIMCCRREGVEKRNMQTPDIQLVHHSSIQKSTKELRDMSKNREIAWPLSTLPVFHPVTGEIIPPMHTDNYDSTNMPLMQTQPNLPHQTQIPQQQTTGKWYP</sequence>
<comment type="function">
    <text evidence="2">Component of the sarcoglycan complex, a subcomplex of the dystrophin-glycoprotein complex which forms a link between the F-actin cytoskeleton and the extracellular matrix.</text>
</comment>
<comment type="subcellular location">
    <subcellularLocation>
        <location evidence="1">Cell membrane</location>
        <location evidence="1">Sarcolemma</location>
        <topology evidence="1">Single-pass membrane protein</topology>
    </subcellularLocation>
    <subcellularLocation>
        <location evidence="3">Cytoplasm</location>
        <location evidence="3">Cytoskeleton</location>
    </subcellularLocation>
    <subcellularLocation>
        <location evidence="1">Cell projection</location>
        <location evidence="1">Dendrite</location>
    </subcellularLocation>
    <subcellularLocation>
        <location evidence="1">Golgi apparatus</location>
    </subcellularLocation>
</comment>
<comment type="tissue specificity">
    <text evidence="5">In both neural tissues including cerebellar cortex, striatum, cerebral cortex, thalamus and hippocampus, and non-neural tissues including quadriceps muscle, liver, kidney, spleen, lung, testis and heart. Widely distributed in the brain, with a robust signal obtained from regions with dense neuronal packing such as the pyramidal cell layer of the hippocampus, cerebellar molecular layer, and cerebral cortex. Levels are highest in kidney, moderate in brain and lung, and low in skeletal muscle, liver, spleen and testis.</text>
</comment>
<comment type="developmental stage">
    <text evidence="5">Expressed at embryonic day 20, postnatal days 1, 7, 14, 36, six months and one and a half years. Highest level at 20 dpc. In muscle, expression is over 10 times higher at 20 dpc and during the early postnatal period than in adults. In adults, expression levels are several-fold higher in brain, particularly in the cerebellar cortex, than in muscle.</text>
</comment>
<comment type="PTM">
    <text evidence="1">N-glycosylated.</text>
</comment>
<comment type="PTM">
    <text evidence="1">Ubiquitinated, leading to its degradation by the proteasome.</text>
</comment>
<comment type="similarity">
    <text evidence="4">Belongs to the sarcoglycan alpha/epsilon family.</text>
</comment>
<evidence type="ECO:0000250" key="1"/>
<evidence type="ECO:0000250" key="2">
    <source>
        <dbReference type="UniProtKB" id="O43556"/>
    </source>
</evidence>
<evidence type="ECO:0000250" key="3">
    <source>
        <dbReference type="UniProtKB" id="P82350"/>
    </source>
</evidence>
<evidence type="ECO:0000255" key="4"/>
<evidence type="ECO:0000269" key="5">
    <source>
    </source>
</evidence>
<evidence type="ECO:0000305" key="6"/>
<evidence type="ECO:0000312" key="7">
    <source>
        <dbReference type="EMBL" id="AAH89947.1"/>
    </source>
</evidence>
<evidence type="ECO:0000312" key="8">
    <source>
        <dbReference type="EMBL" id="AAO37579.1"/>
    </source>
</evidence>
<evidence type="ECO:0000312" key="9">
    <source>
        <dbReference type="RGD" id="1303201"/>
    </source>
</evidence>